<name>SYE_LEUCK</name>
<dbReference type="EC" id="6.1.1.17" evidence="1"/>
<dbReference type="EMBL" id="DQ489736">
    <property type="protein sequence ID" value="ACA81993.1"/>
    <property type="molecule type" value="Genomic_DNA"/>
</dbReference>
<dbReference type="RefSeq" id="WP_004899587.1">
    <property type="nucleotide sequence ID" value="NC_010471.1"/>
</dbReference>
<dbReference type="SMR" id="B1MWU1"/>
<dbReference type="STRING" id="349519.LCK_00160"/>
<dbReference type="GeneID" id="61102928"/>
<dbReference type="KEGG" id="lci:LCK_00160"/>
<dbReference type="eggNOG" id="COG0008">
    <property type="taxonomic scope" value="Bacteria"/>
</dbReference>
<dbReference type="HOGENOM" id="CLU_015768_6_1_9"/>
<dbReference type="OrthoDB" id="9807503at2"/>
<dbReference type="Proteomes" id="UP000002166">
    <property type="component" value="Chromosome"/>
</dbReference>
<dbReference type="GO" id="GO:0005829">
    <property type="term" value="C:cytosol"/>
    <property type="evidence" value="ECO:0007669"/>
    <property type="project" value="TreeGrafter"/>
</dbReference>
<dbReference type="GO" id="GO:0005524">
    <property type="term" value="F:ATP binding"/>
    <property type="evidence" value="ECO:0007669"/>
    <property type="project" value="UniProtKB-UniRule"/>
</dbReference>
<dbReference type="GO" id="GO:0004818">
    <property type="term" value="F:glutamate-tRNA ligase activity"/>
    <property type="evidence" value="ECO:0007669"/>
    <property type="project" value="UniProtKB-UniRule"/>
</dbReference>
<dbReference type="GO" id="GO:0000049">
    <property type="term" value="F:tRNA binding"/>
    <property type="evidence" value="ECO:0007669"/>
    <property type="project" value="InterPro"/>
</dbReference>
<dbReference type="GO" id="GO:0008270">
    <property type="term" value="F:zinc ion binding"/>
    <property type="evidence" value="ECO:0007669"/>
    <property type="project" value="InterPro"/>
</dbReference>
<dbReference type="GO" id="GO:0006424">
    <property type="term" value="P:glutamyl-tRNA aminoacylation"/>
    <property type="evidence" value="ECO:0007669"/>
    <property type="project" value="UniProtKB-UniRule"/>
</dbReference>
<dbReference type="CDD" id="cd00808">
    <property type="entry name" value="GluRS_core"/>
    <property type="match status" value="1"/>
</dbReference>
<dbReference type="FunFam" id="3.40.50.620:FF:000007">
    <property type="entry name" value="Glutamate--tRNA ligase"/>
    <property type="match status" value="1"/>
</dbReference>
<dbReference type="Gene3D" id="1.10.10.350">
    <property type="match status" value="1"/>
</dbReference>
<dbReference type="Gene3D" id="3.40.50.620">
    <property type="entry name" value="HUPs"/>
    <property type="match status" value="1"/>
</dbReference>
<dbReference type="HAMAP" id="MF_00022">
    <property type="entry name" value="Glu_tRNA_synth_type1"/>
    <property type="match status" value="1"/>
</dbReference>
<dbReference type="InterPro" id="IPR045462">
    <property type="entry name" value="aa-tRNA-synth_I_cd-bd"/>
</dbReference>
<dbReference type="InterPro" id="IPR020751">
    <property type="entry name" value="aa-tRNA-synth_I_codon-bd_sub2"/>
</dbReference>
<dbReference type="InterPro" id="IPR001412">
    <property type="entry name" value="aa-tRNA-synth_I_CS"/>
</dbReference>
<dbReference type="InterPro" id="IPR008925">
    <property type="entry name" value="aa_tRNA-synth_I_cd-bd_sf"/>
</dbReference>
<dbReference type="InterPro" id="IPR004527">
    <property type="entry name" value="Glu-tRNA-ligase_bac/mito"/>
</dbReference>
<dbReference type="InterPro" id="IPR000924">
    <property type="entry name" value="Glu/Gln-tRNA-synth"/>
</dbReference>
<dbReference type="InterPro" id="IPR020058">
    <property type="entry name" value="Glu/Gln-tRNA-synth_Ib_cat-dom"/>
</dbReference>
<dbReference type="InterPro" id="IPR049940">
    <property type="entry name" value="GluQ/Sye"/>
</dbReference>
<dbReference type="InterPro" id="IPR033910">
    <property type="entry name" value="GluRS_core"/>
</dbReference>
<dbReference type="InterPro" id="IPR014729">
    <property type="entry name" value="Rossmann-like_a/b/a_fold"/>
</dbReference>
<dbReference type="NCBIfam" id="TIGR00464">
    <property type="entry name" value="gltX_bact"/>
    <property type="match status" value="1"/>
</dbReference>
<dbReference type="PANTHER" id="PTHR43311">
    <property type="entry name" value="GLUTAMATE--TRNA LIGASE"/>
    <property type="match status" value="1"/>
</dbReference>
<dbReference type="PANTHER" id="PTHR43311:SF2">
    <property type="entry name" value="GLUTAMATE--TRNA LIGASE, MITOCHONDRIAL-RELATED"/>
    <property type="match status" value="1"/>
</dbReference>
<dbReference type="Pfam" id="PF19269">
    <property type="entry name" value="Anticodon_2"/>
    <property type="match status" value="1"/>
</dbReference>
<dbReference type="Pfam" id="PF00749">
    <property type="entry name" value="tRNA-synt_1c"/>
    <property type="match status" value="1"/>
</dbReference>
<dbReference type="PRINTS" id="PR00987">
    <property type="entry name" value="TRNASYNTHGLU"/>
</dbReference>
<dbReference type="SUPFAM" id="SSF48163">
    <property type="entry name" value="An anticodon-binding domain of class I aminoacyl-tRNA synthetases"/>
    <property type="match status" value="1"/>
</dbReference>
<dbReference type="SUPFAM" id="SSF52374">
    <property type="entry name" value="Nucleotidylyl transferase"/>
    <property type="match status" value="1"/>
</dbReference>
<dbReference type="PROSITE" id="PS00178">
    <property type="entry name" value="AA_TRNA_LIGASE_I"/>
    <property type="match status" value="1"/>
</dbReference>
<protein>
    <recommendedName>
        <fullName evidence="1">Glutamate--tRNA ligase</fullName>
        <ecNumber evidence="1">6.1.1.17</ecNumber>
    </recommendedName>
    <alternativeName>
        <fullName evidence="1">Glutamyl-tRNA synthetase</fullName>
        <shortName evidence="1">GluRS</shortName>
    </alternativeName>
</protein>
<evidence type="ECO:0000255" key="1">
    <source>
        <dbReference type="HAMAP-Rule" id="MF_00022"/>
    </source>
</evidence>
<organism>
    <name type="scientific">Leuconostoc citreum (strain KM20)</name>
    <dbReference type="NCBI Taxonomy" id="349519"/>
    <lineage>
        <taxon>Bacteria</taxon>
        <taxon>Bacillati</taxon>
        <taxon>Bacillota</taxon>
        <taxon>Bacilli</taxon>
        <taxon>Lactobacillales</taxon>
        <taxon>Lactobacillaceae</taxon>
        <taxon>Leuconostoc</taxon>
    </lineage>
</organism>
<gene>
    <name evidence="1" type="primary">gltX</name>
    <name type="ordered locus">LCK_00160</name>
</gene>
<sequence length="498" mass="57008">MTEDIRVRYAPSPTGHLHIGNARTAIFNWLFARHYNGKFIIRIEDTDSARNIADGEKSQLENLAWLGLDWDESPEKPGEYGPYRQSERNEQGIYQPFIDKLLTEGLAYKSYKTSEQLASEREAQQAAKQAPHYVYEYEGLTREEREAKYAEFEAKGLKPVVRFRVPEEKTYAWDDIVKGHIEIGAKEVGGDWVIQKADGMPTYNFAVVVDDHMMKISHVLRGDDHVSNTPKQMMIFEALGWDIPQFGHMALIINGETGKKLSKRDENVLQFVEQYKALGYQPQAMVNFIGLLGWSPKGEDEIFSLEEFKQMFDETRLSKANAKFDQKKLEWINNQWMRRDLEEIMPQLIQELVTANLVSPADATAKADWLAQVIKVAGVEGISYTREIVDLVRQPFFELGDITDEMVAYLTSEEGRRVFDAWESAYIALPDDATAEDYLNAIRGIQNQLEIKGRNLWNPIRIATTHEVQGPNLPEMLVVLDKATVLQTMADVKSNYLN</sequence>
<keyword id="KW-0030">Aminoacyl-tRNA synthetase</keyword>
<keyword id="KW-0067">ATP-binding</keyword>
<keyword id="KW-0963">Cytoplasm</keyword>
<keyword id="KW-0436">Ligase</keyword>
<keyword id="KW-0547">Nucleotide-binding</keyword>
<keyword id="KW-0648">Protein biosynthesis</keyword>
<keyword id="KW-1185">Reference proteome</keyword>
<feature type="chain" id="PRO_1000090085" description="Glutamate--tRNA ligase">
    <location>
        <begin position="1"/>
        <end position="498"/>
    </location>
</feature>
<feature type="short sequence motif" description="'HIGH' region" evidence="1">
    <location>
        <begin position="11"/>
        <end position="21"/>
    </location>
</feature>
<feature type="short sequence motif" description="'KMSKS' region" evidence="1">
    <location>
        <begin position="260"/>
        <end position="264"/>
    </location>
</feature>
<feature type="binding site" evidence="1">
    <location>
        <position position="263"/>
    </location>
    <ligand>
        <name>ATP</name>
        <dbReference type="ChEBI" id="CHEBI:30616"/>
    </ligand>
</feature>
<accession>B1MWU1</accession>
<reference key="1">
    <citation type="journal article" date="2008" name="J. Bacteriol.">
        <title>Complete genome sequence of Leuconostoc citreum KM20.</title>
        <authorList>
            <person name="Kim J.F."/>
            <person name="Jeong H."/>
            <person name="Lee J.-S."/>
            <person name="Choi S.-H."/>
            <person name="Ha M."/>
            <person name="Hur C.-G."/>
            <person name="Kim J.-S."/>
            <person name="Lee S."/>
            <person name="Park H.-S."/>
            <person name="Park Y.-H."/>
            <person name="Oh T.K."/>
        </authorList>
    </citation>
    <scope>NUCLEOTIDE SEQUENCE [LARGE SCALE GENOMIC DNA]</scope>
    <source>
        <strain>KM20</strain>
    </source>
</reference>
<comment type="function">
    <text evidence="1">Catalyzes the attachment of glutamate to tRNA(Glu) in a two-step reaction: glutamate is first activated by ATP to form Glu-AMP and then transferred to the acceptor end of tRNA(Glu).</text>
</comment>
<comment type="catalytic activity">
    <reaction evidence="1">
        <text>tRNA(Glu) + L-glutamate + ATP = L-glutamyl-tRNA(Glu) + AMP + diphosphate</text>
        <dbReference type="Rhea" id="RHEA:23540"/>
        <dbReference type="Rhea" id="RHEA-COMP:9663"/>
        <dbReference type="Rhea" id="RHEA-COMP:9680"/>
        <dbReference type="ChEBI" id="CHEBI:29985"/>
        <dbReference type="ChEBI" id="CHEBI:30616"/>
        <dbReference type="ChEBI" id="CHEBI:33019"/>
        <dbReference type="ChEBI" id="CHEBI:78442"/>
        <dbReference type="ChEBI" id="CHEBI:78520"/>
        <dbReference type="ChEBI" id="CHEBI:456215"/>
        <dbReference type="EC" id="6.1.1.17"/>
    </reaction>
</comment>
<comment type="subunit">
    <text evidence="1">Monomer.</text>
</comment>
<comment type="subcellular location">
    <subcellularLocation>
        <location evidence="1">Cytoplasm</location>
    </subcellularLocation>
</comment>
<comment type="similarity">
    <text evidence="1">Belongs to the class-I aminoacyl-tRNA synthetase family. Glutamate--tRNA ligase type 1 subfamily.</text>
</comment>
<proteinExistence type="inferred from homology"/>